<proteinExistence type="evidence at transcript level"/>
<dbReference type="EMBL" id="X52879">
    <property type="protein sequence ID" value="CAA37061.1"/>
    <property type="molecule type" value="mRNA"/>
</dbReference>
<dbReference type="PIR" id="S14702">
    <property type="entry name" value="S14702"/>
</dbReference>
<dbReference type="RefSeq" id="NP_001105426.1">
    <property type="nucleotide sequence ID" value="NM_001111956.1"/>
</dbReference>
<dbReference type="SMR" id="P18026"/>
<dbReference type="STRING" id="4577.P18026"/>
<dbReference type="PaxDb" id="4577-GRMZM2G334899_P01"/>
<dbReference type="EnsemblPlants" id="Zm00001eb349430_T001">
    <property type="protein sequence ID" value="Zm00001eb349430_P001"/>
    <property type="gene ID" value="Zm00001eb349430"/>
</dbReference>
<dbReference type="GeneID" id="542380"/>
<dbReference type="Gramene" id="Zm00001eb349430_T001">
    <property type="protein sequence ID" value="Zm00001eb349430_P001"/>
    <property type="gene ID" value="Zm00001eb349430"/>
</dbReference>
<dbReference type="KEGG" id="zma:542380"/>
<dbReference type="MaizeGDB" id="24940"/>
<dbReference type="eggNOG" id="KOG1375">
    <property type="taxonomic scope" value="Eukaryota"/>
</dbReference>
<dbReference type="HOGENOM" id="CLU_015718_1_1_1"/>
<dbReference type="InParanoid" id="P18026"/>
<dbReference type="OrthoDB" id="732292at2759"/>
<dbReference type="Proteomes" id="UP000007305">
    <property type="component" value="Chromosome 8"/>
</dbReference>
<dbReference type="GO" id="GO:0005737">
    <property type="term" value="C:cytoplasm"/>
    <property type="evidence" value="ECO:0000318"/>
    <property type="project" value="GO_Central"/>
</dbReference>
<dbReference type="GO" id="GO:0005874">
    <property type="term" value="C:microtubule"/>
    <property type="evidence" value="ECO:0000318"/>
    <property type="project" value="GO_Central"/>
</dbReference>
<dbReference type="GO" id="GO:0005525">
    <property type="term" value="F:GTP binding"/>
    <property type="evidence" value="ECO:0000318"/>
    <property type="project" value="GO_Central"/>
</dbReference>
<dbReference type="GO" id="GO:0003924">
    <property type="term" value="F:GTPase activity"/>
    <property type="evidence" value="ECO:0007669"/>
    <property type="project" value="InterPro"/>
</dbReference>
<dbReference type="GO" id="GO:0046872">
    <property type="term" value="F:metal ion binding"/>
    <property type="evidence" value="ECO:0007669"/>
    <property type="project" value="UniProtKB-KW"/>
</dbReference>
<dbReference type="GO" id="GO:0005200">
    <property type="term" value="F:structural constituent of cytoskeleton"/>
    <property type="evidence" value="ECO:0000318"/>
    <property type="project" value="GO_Central"/>
</dbReference>
<dbReference type="GO" id="GO:0000226">
    <property type="term" value="P:microtubule cytoskeleton organization"/>
    <property type="evidence" value="ECO:0000318"/>
    <property type="project" value="GO_Central"/>
</dbReference>
<dbReference type="GO" id="GO:0000278">
    <property type="term" value="P:mitotic cell cycle"/>
    <property type="evidence" value="ECO:0000318"/>
    <property type="project" value="GO_Central"/>
</dbReference>
<dbReference type="CDD" id="cd02187">
    <property type="entry name" value="beta_tubulin"/>
    <property type="match status" value="1"/>
</dbReference>
<dbReference type="FunFam" id="1.10.287.600:FF:000002">
    <property type="entry name" value="Tubulin beta chain"/>
    <property type="match status" value="1"/>
</dbReference>
<dbReference type="FunFam" id="3.30.1330.20:FF:000002">
    <property type="entry name" value="Tubulin beta chain"/>
    <property type="match status" value="1"/>
</dbReference>
<dbReference type="FunFam" id="3.40.50.1440:FF:000005">
    <property type="entry name" value="Tubulin beta chain"/>
    <property type="match status" value="1"/>
</dbReference>
<dbReference type="Gene3D" id="1.10.287.600">
    <property type="entry name" value="Helix hairpin bin"/>
    <property type="match status" value="1"/>
</dbReference>
<dbReference type="Gene3D" id="3.30.1330.20">
    <property type="entry name" value="Tubulin/FtsZ, C-terminal domain"/>
    <property type="match status" value="1"/>
</dbReference>
<dbReference type="Gene3D" id="3.40.50.1440">
    <property type="entry name" value="Tubulin/FtsZ, GTPase domain"/>
    <property type="match status" value="1"/>
</dbReference>
<dbReference type="InterPro" id="IPR013838">
    <property type="entry name" value="Beta-tubulin_BS"/>
</dbReference>
<dbReference type="InterPro" id="IPR002453">
    <property type="entry name" value="Beta_tubulin"/>
</dbReference>
<dbReference type="InterPro" id="IPR008280">
    <property type="entry name" value="Tub_FtsZ_C"/>
</dbReference>
<dbReference type="InterPro" id="IPR000217">
    <property type="entry name" value="Tubulin"/>
</dbReference>
<dbReference type="InterPro" id="IPR037103">
    <property type="entry name" value="Tubulin/FtsZ-like_C"/>
</dbReference>
<dbReference type="InterPro" id="IPR018316">
    <property type="entry name" value="Tubulin/FtsZ_2-layer-sand-dom"/>
</dbReference>
<dbReference type="InterPro" id="IPR036525">
    <property type="entry name" value="Tubulin/FtsZ_GTPase_sf"/>
</dbReference>
<dbReference type="InterPro" id="IPR023123">
    <property type="entry name" value="Tubulin_C"/>
</dbReference>
<dbReference type="InterPro" id="IPR017975">
    <property type="entry name" value="Tubulin_CS"/>
</dbReference>
<dbReference type="InterPro" id="IPR003008">
    <property type="entry name" value="Tubulin_FtsZ_GTPase"/>
</dbReference>
<dbReference type="PANTHER" id="PTHR11588">
    <property type="entry name" value="TUBULIN"/>
    <property type="match status" value="1"/>
</dbReference>
<dbReference type="Pfam" id="PF00091">
    <property type="entry name" value="Tubulin"/>
    <property type="match status" value="1"/>
</dbReference>
<dbReference type="Pfam" id="PF03953">
    <property type="entry name" value="Tubulin_C"/>
    <property type="match status" value="1"/>
</dbReference>
<dbReference type="PRINTS" id="PR01163">
    <property type="entry name" value="BETATUBULIN"/>
</dbReference>
<dbReference type="PRINTS" id="PR01161">
    <property type="entry name" value="TUBULIN"/>
</dbReference>
<dbReference type="SMART" id="SM00864">
    <property type="entry name" value="Tubulin"/>
    <property type="match status" value="1"/>
</dbReference>
<dbReference type="SMART" id="SM00865">
    <property type="entry name" value="Tubulin_C"/>
    <property type="match status" value="1"/>
</dbReference>
<dbReference type="SUPFAM" id="SSF55307">
    <property type="entry name" value="Tubulin C-terminal domain-like"/>
    <property type="match status" value="1"/>
</dbReference>
<dbReference type="SUPFAM" id="SSF52490">
    <property type="entry name" value="Tubulin nucleotide-binding domain-like"/>
    <property type="match status" value="1"/>
</dbReference>
<dbReference type="PROSITE" id="PS00227">
    <property type="entry name" value="TUBULIN"/>
    <property type="match status" value="1"/>
</dbReference>
<dbReference type="PROSITE" id="PS00228">
    <property type="entry name" value="TUBULIN_B_AUTOREG"/>
    <property type="match status" value="1"/>
</dbReference>
<comment type="function">
    <text>Tubulin is the major constituent of microtubules, a cylinder consisting of laterally associated linear protofilaments composed of alpha- and beta-tubulin heterodimers. Microtubules grow by the addition of GTP-tubulin dimers to the microtubule end, where a stabilizing cap forms. Below the cap, tubulin dimers are in GDP-bound state, owing to GTPase activity of alpha-tubulin.</text>
</comment>
<comment type="cofactor">
    <cofactor evidence="1">
        <name>Mg(2+)</name>
        <dbReference type="ChEBI" id="CHEBI:18420"/>
    </cofactor>
</comment>
<comment type="subunit">
    <text>Dimer of alpha and beta chains. A typical microtubule is a hollow water-filled tube with an outer diameter of 25 nm and an inner diameter of 15 nM. Alpha-beta heterodimers associate head-to-tail to form protofilaments running lengthwise along the microtubule wall with the beta-tubulin subunit facing the microtubule plus end conferring a structural polarity. Microtubules usually have 13 protofilaments but different protofilament numbers can be found in some organisms and specialized cells.</text>
</comment>
<comment type="subcellular location">
    <subcellularLocation>
        <location>Cytoplasm</location>
        <location>Cytoskeleton</location>
    </subcellularLocation>
</comment>
<comment type="similarity">
    <text evidence="3">Belongs to the tubulin family.</text>
</comment>
<reference key="1">
    <citation type="journal article" date="1990" name="Plant Mol. Biol.">
        <title>The beta-tubulin gene family in Zea mays: two differentially expressed beta-tubulin genes.</title>
        <authorList>
            <person name="Hussey P.J."/>
            <person name="Haas N."/>
            <person name="Hunsperger J."/>
            <person name="Larkin J."/>
            <person name="Snustad D.P."/>
            <person name="Silflow C.D."/>
        </authorList>
    </citation>
    <scope>NUCLEOTIDE SEQUENCE [MRNA]</scope>
    <source>
        <strain>cv. A188</strain>
        <tissue>Endosperm</tissue>
    </source>
</reference>
<accession>P18026</accession>
<protein>
    <recommendedName>
        <fullName>Tubulin beta-2 chain</fullName>
    </recommendedName>
    <alternativeName>
        <fullName>Beta-2-tubulin</fullName>
    </alternativeName>
</protein>
<feature type="chain" id="PRO_0000048356" description="Tubulin beta-2 chain">
    <location>
        <begin position="1"/>
        <end position="444"/>
    </location>
</feature>
<feature type="binding site" evidence="2">
    <location>
        <position position="11"/>
    </location>
    <ligand>
        <name>GTP</name>
        <dbReference type="ChEBI" id="CHEBI:37565"/>
    </ligand>
</feature>
<feature type="binding site" evidence="1">
    <location>
        <position position="69"/>
    </location>
    <ligand>
        <name>GTP</name>
        <dbReference type="ChEBI" id="CHEBI:37565"/>
    </ligand>
</feature>
<feature type="binding site" evidence="1">
    <location>
        <position position="69"/>
    </location>
    <ligand>
        <name>Mg(2+)</name>
        <dbReference type="ChEBI" id="CHEBI:18420"/>
    </ligand>
</feature>
<feature type="binding site" evidence="2">
    <location>
        <position position="138"/>
    </location>
    <ligand>
        <name>GTP</name>
        <dbReference type="ChEBI" id="CHEBI:37565"/>
    </ligand>
</feature>
<feature type="binding site" evidence="2">
    <location>
        <position position="142"/>
    </location>
    <ligand>
        <name>GTP</name>
        <dbReference type="ChEBI" id="CHEBI:37565"/>
    </ligand>
</feature>
<feature type="binding site" evidence="2">
    <location>
        <position position="143"/>
    </location>
    <ligand>
        <name>GTP</name>
        <dbReference type="ChEBI" id="CHEBI:37565"/>
    </ligand>
</feature>
<feature type="binding site" evidence="2">
    <location>
        <position position="144"/>
    </location>
    <ligand>
        <name>GTP</name>
        <dbReference type="ChEBI" id="CHEBI:37565"/>
    </ligand>
</feature>
<feature type="binding site" evidence="2">
    <location>
        <position position="204"/>
    </location>
    <ligand>
        <name>GTP</name>
        <dbReference type="ChEBI" id="CHEBI:37565"/>
    </ligand>
</feature>
<feature type="binding site" evidence="2">
    <location>
        <position position="226"/>
    </location>
    <ligand>
        <name>GTP</name>
        <dbReference type="ChEBI" id="CHEBI:37565"/>
    </ligand>
</feature>
<evidence type="ECO:0000250" key="1">
    <source>
        <dbReference type="UniProtKB" id="P68363"/>
    </source>
</evidence>
<evidence type="ECO:0000250" key="2">
    <source>
        <dbReference type="UniProtKB" id="Q13509"/>
    </source>
</evidence>
<evidence type="ECO:0000305" key="3"/>
<name>TBB2_MAIZE</name>
<gene>
    <name type="primary">TUBB2</name>
    <name type="synonym">TUB2</name>
</gene>
<sequence>MREILHIQGGQCGNQIGSKFWEVVCDEHGIDPTGRYMGTSDVQLERVNVYYNEASCGRFVPRAVLMDLEPGTMDAVRTGPYGQIFRPDNFVFGQSGAGNNWAKGHYTEGAELIDSVLDVVRKEAENCDCLQGFQVCHSLGGGTGSGMGTLLISKIREEYPDRMMMTFSVFPSPKVSDTVVEPYNATLSVHQLVENADECMVLDNEALYDICFRTLKLTTPSFGDLNHLISATMSGVTCCLRFPGQLNSDLRKLAVNLIPFPRLHFFMVGFAPLTSRGSQQYRSLTVPELTQQMWDSKNMMCAADPRHGRYLTASAMFRGKMSTKEVDEQMINVQNKNSSYFVEWIPNNVKSSVCDIPPRGLSMSSTFVGNSTSIQEMFRRVSEQFTAMFRRKAFLHWYTGEGMDEMEFTEAESNMNDLVSEYQQYQDATADEEADYEEEEAAAE</sequence>
<organism>
    <name type="scientific">Zea mays</name>
    <name type="common">Maize</name>
    <dbReference type="NCBI Taxonomy" id="4577"/>
    <lineage>
        <taxon>Eukaryota</taxon>
        <taxon>Viridiplantae</taxon>
        <taxon>Streptophyta</taxon>
        <taxon>Embryophyta</taxon>
        <taxon>Tracheophyta</taxon>
        <taxon>Spermatophyta</taxon>
        <taxon>Magnoliopsida</taxon>
        <taxon>Liliopsida</taxon>
        <taxon>Poales</taxon>
        <taxon>Poaceae</taxon>
        <taxon>PACMAD clade</taxon>
        <taxon>Panicoideae</taxon>
        <taxon>Andropogonodae</taxon>
        <taxon>Andropogoneae</taxon>
        <taxon>Tripsacinae</taxon>
        <taxon>Zea</taxon>
    </lineage>
</organism>
<keyword id="KW-0963">Cytoplasm</keyword>
<keyword id="KW-0206">Cytoskeleton</keyword>
<keyword id="KW-0342">GTP-binding</keyword>
<keyword id="KW-0460">Magnesium</keyword>
<keyword id="KW-0479">Metal-binding</keyword>
<keyword id="KW-0493">Microtubule</keyword>
<keyword id="KW-0547">Nucleotide-binding</keyword>
<keyword id="KW-1185">Reference proteome</keyword>